<feature type="chain" id="PRO_0000437256" description="Stimulator of interferon genes protein">
    <location>
        <begin position="1"/>
        <end position="379"/>
    </location>
</feature>
<feature type="topological domain" description="Cytoplasmic" evidence="7">
    <location>
        <begin position="1"/>
        <end position="17"/>
    </location>
</feature>
<feature type="transmembrane region" description="Helical; Name=1" evidence="3">
    <location>
        <begin position="18"/>
        <end position="34"/>
    </location>
</feature>
<feature type="topological domain" description="Lumenal" evidence="7">
    <location>
        <begin position="35"/>
        <end position="44"/>
    </location>
</feature>
<feature type="transmembrane region" description="Helical; Name=2" evidence="3">
    <location>
        <begin position="45"/>
        <end position="69"/>
    </location>
</feature>
<feature type="topological domain" description="Cytoplasmic" evidence="7">
    <location>
        <begin position="70"/>
        <end position="91"/>
    </location>
</feature>
<feature type="transmembrane region" description="Helical; Name=3" evidence="3">
    <location>
        <begin position="92"/>
        <end position="106"/>
    </location>
</feature>
<feature type="topological domain" description="Lumenal" evidence="7">
    <location>
        <begin position="107"/>
        <end position="116"/>
    </location>
</feature>
<feature type="transmembrane region" description="Helical; Name=4" evidence="3">
    <location>
        <begin position="117"/>
        <end position="134"/>
    </location>
</feature>
<feature type="topological domain" description="Cytoplasmic" evidence="7">
    <location>
        <begin position="135"/>
        <end position="379"/>
    </location>
</feature>
<feature type="region of interest" description="Mediates interaction with ZDHHC1 and ZDHHC11" evidence="3">
    <location>
        <begin position="1"/>
        <end position="190"/>
    </location>
</feature>
<feature type="region of interest" description="Cyclic dinucleotide-binding domain (CBD)" evidence="5">
    <location>
        <begin position="153"/>
        <end position="340"/>
    </location>
</feature>
<feature type="region of interest" description="C-terminal tail (CTT)" evidence="3">
    <location>
        <begin position="340"/>
        <end position="379"/>
    </location>
</feature>
<feature type="short sequence motif" description="pLxIS motif" evidence="3">
    <location>
        <begin position="363"/>
        <end position="366"/>
    </location>
</feature>
<feature type="binding site" evidence="8">
    <location>
        <begin position="162"/>
        <end position="167"/>
    </location>
    <ligand>
        <name>2',3'-cGAMP</name>
        <dbReference type="ChEBI" id="CHEBI:143093"/>
    </ligand>
</feature>
<feature type="binding site" evidence="2">
    <location>
        <position position="166"/>
    </location>
    <ligand>
        <name>3',3'-c-di-GMP</name>
        <dbReference type="ChEBI" id="CHEBI:58805"/>
    </ligand>
</feature>
<feature type="binding site" evidence="3">
    <location>
        <position position="167"/>
    </location>
    <ligand>
        <name>2',3'-cUAMP</name>
        <dbReference type="ChEBI" id="CHEBI:228269"/>
    </ligand>
</feature>
<feature type="binding site" evidence="8">
    <location>
        <begin position="238"/>
        <end position="241"/>
    </location>
    <ligand>
        <name>2',3'-cGAMP</name>
        <dbReference type="ChEBI" id="CHEBI:143093"/>
    </ligand>
</feature>
<feature type="binding site" evidence="2">
    <location>
        <begin position="238"/>
        <end position="241"/>
    </location>
    <ligand>
        <name>3',3'-c-di-GMP</name>
        <dbReference type="ChEBI" id="CHEBI:58805"/>
    </ligand>
</feature>
<feature type="binding site" evidence="3">
    <location>
        <position position="238"/>
    </location>
    <ligand>
        <name>2',3'-cUAMP</name>
        <dbReference type="ChEBI" id="CHEBI:228269"/>
    </ligand>
</feature>
<feature type="binding site" evidence="8">
    <location>
        <position position="263"/>
    </location>
    <ligand>
        <name>2',3'-cGAMP</name>
        <dbReference type="ChEBI" id="CHEBI:143093"/>
    </ligand>
</feature>
<feature type="binding site" evidence="3">
    <location>
        <position position="263"/>
    </location>
    <ligand>
        <name>2',3'-cUAMP</name>
        <dbReference type="ChEBI" id="CHEBI:228269"/>
    </ligand>
</feature>
<feature type="binding site" evidence="2">
    <location>
        <position position="263"/>
    </location>
    <ligand>
        <name>3',3'-c-di-GMP</name>
        <dbReference type="ChEBI" id="CHEBI:58805"/>
    </ligand>
</feature>
<feature type="modified residue" description="Phosphoserine" evidence="3">
    <location>
        <position position="241"/>
    </location>
</feature>
<feature type="modified residue" description="Phosphoserine" evidence="3">
    <location>
        <position position="355"/>
    </location>
</feature>
<feature type="modified residue" description="Phosphoserine; by TBK1" evidence="3">
    <location>
        <position position="358"/>
    </location>
</feature>
<feature type="modified residue" description="Phosphoserine; by TBK1" evidence="3">
    <location>
        <position position="366"/>
    </location>
</feature>
<feature type="lipid moiety-binding region" description="S-palmitoyl cysteine" evidence="2">
    <location>
        <position position="88"/>
    </location>
</feature>
<feature type="cross-link" description="Glycyl lysine isopeptide (Lys-Gly) (interchain with G-Cter in ubiquitin)" evidence="2">
    <location>
        <position position="151"/>
    </location>
</feature>
<feature type="cross-link" description="Glycyl lysine isopeptide (Lys-Gly) (interchain with G-Cter in ubiquitin)" evidence="3">
    <location>
        <position position="236"/>
    </location>
</feature>
<feature type="cross-link" description="Glycyl lysine isopeptide (Lys-Gly) (interchain with G-Cter in SUMO)" evidence="2">
    <location>
        <position position="338"/>
    </location>
</feature>
<feature type="mutagenesis site" description="Abolishes response to 2'-3' linked cGAMP and 3'-3' linked cGAMP and production of interferon IFNB1." evidence="5">
    <original>P</original>
    <variation>A</variation>
    <location>
        <position position="141"/>
    </location>
</feature>
<feature type="mutagenesis site" description="Abolishes response to 2'-3' linked cGAMP and 3'-3' linked cGAMP and production of interferon IFNB1." evidence="5">
    <original>E</original>
    <variation>A</variation>
    <location>
        <position position="143"/>
    </location>
</feature>
<feature type="mutagenesis site" description="Decreases response to 2'-3' linked cGAMP and 3'-3' linked cGAMP and production of interferon IFNB1." evidence="5">
    <original>V</original>
    <variation>A</variation>
    <location>
        <position position="144"/>
    </location>
</feature>
<feature type="mutagenesis site" description="Abolishes response to 2'-3' linked cGAMP and 3'-3' linked cGAMP and production of interferon IFNB1." evidence="5">
    <original>S</original>
    <variation>A</variation>
    <location>
        <position position="145"/>
    </location>
</feature>
<feature type="mutagenesis site" description="Abolishes response to 2'-3' linked cGAMP and 3'-3' linked cGAMP and production of interferon IFNB1." evidence="5">
    <original>E</original>
    <variation>A</variation>
    <variation>R</variation>
    <location>
        <position position="149"/>
    </location>
</feature>
<feature type="mutagenesis site" description="Abolishes response to 2'-3' linked cGAMP and 3'-3' linked cGAMP and production of interferon IFNB1." evidence="5">
    <original>E</original>
    <variation>A</variation>
    <location>
        <position position="150"/>
    </location>
</feature>
<feature type="mutagenesis site" description="Abolishes response to 2'-3' linked cGAMP and 3'-3' linked cGAMP and production of interferon IFNB1." evidence="5">
    <original>K</original>
    <variation>R</variation>
    <location>
        <position position="151"/>
    </location>
</feature>
<feature type="mutagenesis site" description="No effect on response to 2'-3' linked cGAMP and production of interferon IFNB1. Strongly increases affinity for the synthetic compound 5,6-dimethylxanthenone 4-acetic acid (DMXAA)." evidence="5">
    <original>T</original>
    <variation>I</variation>
    <variation>L</variation>
    <variation>M</variation>
    <variation>V</variation>
    <location>
        <position position="230"/>
    </location>
</feature>
<feature type="helix" evidence="10">
    <location>
        <begin position="155"/>
        <end position="165"/>
    </location>
</feature>
<feature type="helix" evidence="10">
    <location>
        <begin position="168"/>
        <end position="171"/>
    </location>
</feature>
<feature type="turn" evidence="10">
    <location>
        <begin position="172"/>
        <end position="174"/>
    </location>
</feature>
<feature type="helix" evidence="10">
    <location>
        <begin position="175"/>
        <end position="185"/>
    </location>
</feature>
<feature type="turn" evidence="10">
    <location>
        <begin position="186"/>
        <end position="188"/>
    </location>
</feature>
<feature type="helix" evidence="10">
    <location>
        <begin position="193"/>
        <end position="195"/>
    </location>
</feature>
<feature type="strand" evidence="10">
    <location>
        <begin position="196"/>
        <end position="203"/>
    </location>
</feature>
<feature type="helix" evidence="10">
    <location>
        <begin position="212"/>
        <end position="214"/>
    </location>
</feature>
<feature type="strand" evidence="10">
    <location>
        <begin position="219"/>
        <end position="224"/>
    </location>
</feature>
<feature type="strand" evidence="10">
    <location>
        <begin position="228"/>
        <end position="232"/>
    </location>
</feature>
<feature type="strand" evidence="10">
    <location>
        <begin position="235"/>
        <end position="240"/>
    </location>
</feature>
<feature type="strand" evidence="10">
    <location>
        <begin position="243"/>
        <end position="249"/>
    </location>
</feature>
<feature type="strand" evidence="10">
    <location>
        <begin position="252"/>
        <end position="261"/>
    </location>
</feature>
<feature type="helix" evidence="10">
    <location>
        <begin position="264"/>
        <end position="273"/>
    </location>
</feature>
<feature type="helix" evidence="10">
    <location>
        <begin position="275"/>
        <end position="277"/>
    </location>
</feature>
<feature type="helix" evidence="10">
    <location>
        <begin position="281"/>
        <end position="299"/>
    </location>
</feature>
<feature type="helix" evidence="10">
    <location>
        <begin position="304"/>
        <end position="306"/>
    </location>
</feature>
<feature type="strand" evidence="10">
    <location>
        <begin position="309"/>
        <end position="314"/>
    </location>
</feature>
<feature type="helix" evidence="10">
    <location>
        <begin position="316"/>
        <end position="318"/>
    </location>
</feature>
<feature type="helix" evidence="10">
    <location>
        <begin position="325"/>
        <end position="334"/>
    </location>
</feature>
<feature type="helix" evidence="10">
    <location>
        <begin position="336"/>
        <end position="339"/>
    </location>
</feature>
<dbReference type="EMBL" id="AABR07072583">
    <property type="status" value="NOT_ANNOTATED_CDS"/>
    <property type="molecule type" value="Genomic_DNA"/>
</dbReference>
<dbReference type="EMBL" id="AC135285">
    <property type="status" value="NOT_ANNOTATED_CDS"/>
    <property type="molecule type" value="Genomic_DNA"/>
</dbReference>
<dbReference type="EMBL" id="CH473974">
    <property type="protein sequence ID" value="EDL76277.1"/>
    <property type="molecule type" value="Genomic_DNA"/>
</dbReference>
<dbReference type="RefSeq" id="NP_001102592.1">
    <property type="nucleotide sequence ID" value="NM_001109122.1"/>
</dbReference>
<dbReference type="PDB" id="5GRM">
    <property type="method" value="X-ray"/>
    <property type="resolution" value="1.55 A"/>
    <property type="chains" value="A/B=155-341"/>
</dbReference>
<dbReference type="PDB" id="5GS5">
    <property type="method" value="X-ray"/>
    <property type="resolution" value="1.84 A"/>
    <property type="chains" value="A/B/C/D=140-337"/>
</dbReference>
<dbReference type="PDBsum" id="5GRM"/>
<dbReference type="PDBsum" id="5GS5"/>
<dbReference type="SMR" id="F1M391"/>
<dbReference type="FunCoup" id="F1M391">
    <property type="interactions" value="732"/>
</dbReference>
<dbReference type="STRING" id="10116.ENSRNOP00000063348"/>
<dbReference type="BindingDB" id="F1M391"/>
<dbReference type="ChEMBL" id="CHEMBL5169097"/>
<dbReference type="PhosphoSitePlus" id="F1M391"/>
<dbReference type="PaxDb" id="10116-ENSRNOP00000063348"/>
<dbReference type="GeneID" id="498840"/>
<dbReference type="KEGG" id="rno:498840"/>
<dbReference type="AGR" id="RGD:1562552"/>
<dbReference type="CTD" id="340061"/>
<dbReference type="RGD" id="1562552">
    <property type="gene designation" value="Sting1"/>
</dbReference>
<dbReference type="VEuPathDB" id="HostDB:ENSRNOG00000042137"/>
<dbReference type="eggNOG" id="ENOG502R15M">
    <property type="taxonomic scope" value="Eukaryota"/>
</dbReference>
<dbReference type="HOGENOM" id="CLU_062449_0_0_1"/>
<dbReference type="InParanoid" id="F1M391"/>
<dbReference type="OrthoDB" id="77412at9989"/>
<dbReference type="TreeFam" id="TF324444"/>
<dbReference type="Reactome" id="R-RNO-1834941">
    <property type="pathway name" value="STING mediated induction of host immune responses"/>
</dbReference>
<dbReference type="Reactome" id="R-RNO-3134975">
    <property type="pathway name" value="Regulation of innate immune responses to cytosolic DNA"/>
</dbReference>
<dbReference type="Reactome" id="R-RNO-3249367">
    <property type="pathway name" value="STAT6-mediated induction of chemokines"/>
</dbReference>
<dbReference type="Reactome" id="R-RNO-3270619">
    <property type="pathway name" value="IRF3-mediated induction of type I IFN"/>
</dbReference>
<dbReference type="Reactome" id="R-RNO-6798695">
    <property type="pathway name" value="Neutrophil degranulation"/>
</dbReference>
<dbReference type="PRO" id="PR:F1M391"/>
<dbReference type="Proteomes" id="UP000002494">
    <property type="component" value="Chromosome 18"/>
</dbReference>
<dbReference type="Proteomes" id="UP000234681">
    <property type="component" value="Chromosome 18"/>
</dbReference>
<dbReference type="Bgee" id="ENSRNOG00000042137">
    <property type="expression patterns" value="Expressed in spleen and 20 other cell types or tissues"/>
</dbReference>
<dbReference type="GO" id="GO:0005776">
    <property type="term" value="C:autophagosome"/>
    <property type="evidence" value="ECO:0000266"/>
    <property type="project" value="RGD"/>
</dbReference>
<dbReference type="GO" id="GO:0000421">
    <property type="term" value="C:autophagosome membrane"/>
    <property type="evidence" value="ECO:0007669"/>
    <property type="project" value="UniProtKB-SubCell"/>
</dbReference>
<dbReference type="GO" id="GO:0036064">
    <property type="term" value="C:ciliary basal body"/>
    <property type="evidence" value="ECO:0007669"/>
    <property type="project" value="Ensembl"/>
</dbReference>
<dbReference type="GO" id="GO:0005737">
    <property type="term" value="C:cytoplasm"/>
    <property type="evidence" value="ECO:0000250"/>
    <property type="project" value="UniProtKB"/>
</dbReference>
<dbReference type="GO" id="GO:0005829">
    <property type="term" value="C:cytosol"/>
    <property type="evidence" value="ECO:0007669"/>
    <property type="project" value="Ensembl"/>
</dbReference>
<dbReference type="GO" id="GO:0005783">
    <property type="term" value="C:endoplasmic reticulum"/>
    <property type="evidence" value="ECO:0000266"/>
    <property type="project" value="RGD"/>
</dbReference>
<dbReference type="GO" id="GO:0005789">
    <property type="term" value="C:endoplasmic reticulum membrane"/>
    <property type="evidence" value="ECO:0000266"/>
    <property type="project" value="RGD"/>
</dbReference>
<dbReference type="GO" id="GO:0033116">
    <property type="term" value="C:endoplasmic reticulum-Golgi intermediate compartment membrane"/>
    <property type="evidence" value="ECO:0000266"/>
    <property type="project" value="RGD"/>
</dbReference>
<dbReference type="GO" id="GO:0005768">
    <property type="term" value="C:endosome"/>
    <property type="evidence" value="ECO:0000266"/>
    <property type="project" value="RGD"/>
</dbReference>
<dbReference type="GO" id="GO:0005794">
    <property type="term" value="C:Golgi apparatus"/>
    <property type="evidence" value="ECO:0000266"/>
    <property type="project" value="RGD"/>
</dbReference>
<dbReference type="GO" id="GO:0000139">
    <property type="term" value="C:Golgi membrane"/>
    <property type="evidence" value="ECO:0000266"/>
    <property type="project" value="RGD"/>
</dbReference>
<dbReference type="GO" id="GO:0005741">
    <property type="term" value="C:mitochondrial outer membrane"/>
    <property type="evidence" value="ECO:0000266"/>
    <property type="project" value="RGD"/>
</dbReference>
<dbReference type="GO" id="GO:0005654">
    <property type="term" value="C:nucleoplasm"/>
    <property type="evidence" value="ECO:0007669"/>
    <property type="project" value="Ensembl"/>
</dbReference>
<dbReference type="GO" id="GO:0048471">
    <property type="term" value="C:perinuclear region of cytoplasm"/>
    <property type="evidence" value="ECO:0000266"/>
    <property type="project" value="RGD"/>
</dbReference>
<dbReference type="GO" id="GO:0005777">
    <property type="term" value="C:peroxisome"/>
    <property type="evidence" value="ECO:0000266"/>
    <property type="project" value="RGD"/>
</dbReference>
<dbReference type="GO" id="GO:0005886">
    <property type="term" value="C:plasma membrane"/>
    <property type="evidence" value="ECO:0007669"/>
    <property type="project" value="UniProtKB-SubCell"/>
</dbReference>
<dbReference type="GO" id="GO:1990231">
    <property type="term" value="C:STING complex"/>
    <property type="evidence" value="ECO:0000266"/>
    <property type="project" value="RGD"/>
</dbReference>
<dbReference type="GO" id="GO:0061507">
    <property type="term" value="F:2',3'-cyclic GMP-AMP binding"/>
    <property type="evidence" value="ECO:0000314"/>
    <property type="project" value="UniProtKB"/>
</dbReference>
<dbReference type="GO" id="GO:0035438">
    <property type="term" value="F:cyclic-di-GMP binding"/>
    <property type="evidence" value="ECO:0000266"/>
    <property type="project" value="RGD"/>
</dbReference>
<dbReference type="GO" id="GO:0042802">
    <property type="term" value="F:identical protein binding"/>
    <property type="evidence" value="ECO:0000266"/>
    <property type="project" value="RGD"/>
</dbReference>
<dbReference type="GO" id="GO:0042803">
    <property type="term" value="F:protein homodimerization activity"/>
    <property type="evidence" value="ECO:0000266"/>
    <property type="project" value="RGD"/>
</dbReference>
<dbReference type="GO" id="GO:0019901">
    <property type="term" value="F:protein kinase binding"/>
    <property type="evidence" value="ECO:0000266"/>
    <property type="project" value="RGD"/>
</dbReference>
<dbReference type="GO" id="GO:0015252">
    <property type="term" value="F:proton channel activity"/>
    <property type="evidence" value="ECO:0000250"/>
    <property type="project" value="UniProtKB"/>
</dbReference>
<dbReference type="GO" id="GO:0061629">
    <property type="term" value="F:RNA polymerase II-specific DNA-binding transcription factor binding"/>
    <property type="evidence" value="ECO:0000266"/>
    <property type="project" value="RGD"/>
</dbReference>
<dbReference type="GO" id="GO:0035591">
    <property type="term" value="F:signaling adaptor activity"/>
    <property type="evidence" value="ECO:0000250"/>
    <property type="project" value="UniProtKB"/>
</dbReference>
<dbReference type="GO" id="GO:0031625">
    <property type="term" value="F:ubiquitin protein ligase binding"/>
    <property type="evidence" value="ECO:0000266"/>
    <property type="project" value="RGD"/>
</dbReference>
<dbReference type="GO" id="GO:0002218">
    <property type="term" value="P:activation of innate immune response"/>
    <property type="evidence" value="ECO:0000266"/>
    <property type="project" value="RGD"/>
</dbReference>
<dbReference type="GO" id="GO:0140374">
    <property type="term" value="P:antiviral innate immune response"/>
    <property type="evidence" value="ECO:0000266"/>
    <property type="project" value="RGD"/>
</dbReference>
<dbReference type="GO" id="GO:0000045">
    <property type="term" value="P:autophagosome assembly"/>
    <property type="evidence" value="ECO:0000250"/>
    <property type="project" value="UniProtKB"/>
</dbReference>
<dbReference type="GO" id="GO:0071360">
    <property type="term" value="P:cellular response to exogenous dsRNA"/>
    <property type="evidence" value="ECO:0000266"/>
    <property type="project" value="RGD"/>
</dbReference>
<dbReference type="GO" id="GO:0035458">
    <property type="term" value="P:cellular response to interferon-beta"/>
    <property type="evidence" value="ECO:0000266"/>
    <property type="project" value="RGD"/>
</dbReference>
<dbReference type="GO" id="GO:0140896">
    <property type="term" value="P:cGAS/STING signaling pathway"/>
    <property type="evidence" value="ECO:0000250"/>
    <property type="project" value="UniProtKB"/>
</dbReference>
<dbReference type="GO" id="GO:0002753">
    <property type="term" value="P:cytoplasmic pattern recognition receptor signaling pathway"/>
    <property type="evidence" value="ECO:0000266"/>
    <property type="project" value="RGD"/>
</dbReference>
<dbReference type="GO" id="GO:0051607">
    <property type="term" value="P:defense response to virus"/>
    <property type="evidence" value="ECO:0000250"/>
    <property type="project" value="UniProtKB"/>
</dbReference>
<dbReference type="GO" id="GO:0045087">
    <property type="term" value="P:innate immune response"/>
    <property type="evidence" value="ECO:0000250"/>
    <property type="project" value="UniProtKB"/>
</dbReference>
<dbReference type="GO" id="GO:0002221">
    <property type="term" value="P:pattern recognition receptor signaling pathway"/>
    <property type="evidence" value="ECO:0000266"/>
    <property type="project" value="RGD"/>
</dbReference>
<dbReference type="GO" id="GO:0002230">
    <property type="term" value="P:positive regulation of defense response to virus by host"/>
    <property type="evidence" value="ECO:0000266"/>
    <property type="project" value="RGD"/>
</dbReference>
<dbReference type="GO" id="GO:0032728">
    <property type="term" value="P:positive regulation of interferon-beta production"/>
    <property type="evidence" value="ECO:0000250"/>
    <property type="project" value="UniProtKB"/>
</dbReference>
<dbReference type="GO" id="GO:0016239">
    <property type="term" value="P:positive regulation of macroautophagy"/>
    <property type="evidence" value="ECO:0000250"/>
    <property type="project" value="UniProtKB"/>
</dbReference>
<dbReference type="GO" id="GO:0045944">
    <property type="term" value="P:positive regulation of transcription by RNA polymerase II"/>
    <property type="evidence" value="ECO:0000266"/>
    <property type="project" value="RGD"/>
</dbReference>
<dbReference type="GO" id="GO:0032481">
    <property type="term" value="P:positive regulation of type I interferon production"/>
    <property type="evidence" value="ECO:0000314"/>
    <property type="project" value="UniProtKB"/>
</dbReference>
<dbReference type="GO" id="GO:0060340">
    <property type="term" value="P:positive regulation of type I interferon-mediated signaling pathway"/>
    <property type="evidence" value="ECO:0000266"/>
    <property type="project" value="RGD"/>
</dbReference>
<dbReference type="GO" id="GO:0051259">
    <property type="term" value="P:protein complex oligomerization"/>
    <property type="evidence" value="ECO:0000266"/>
    <property type="project" value="RGD"/>
</dbReference>
<dbReference type="GO" id="GO:0070972">
    <property type="term" value="P:protein localization to endoplasmic reticulum"/>
    <property type="evidence" value="ECO:0000266"/>
    <property type="project" value="RGD"/>
</dbReference>
<dbReference type="GO" id="GO:0010468">
    <property type="term" value="P:regulation of gene expression"/>
    <property type="evidence" value="ECO:0000266"/>
    <property type="project" value="RGD"/>
</dbReference>
<dbReference type="GO" id="GO:0050727">
    <property type="term" value="P:regulation of inflammatory response"/>
    <property type="evidence" value="ECO:0000266"/>
    <property type="project" value="RGD"/>
</dbReference>
<dbReference type="GO" id="GO:0019222">
    <property type="term" value="P:regulation of metabolic process"/>
    <property type="evidence" value="ECO:0000266"/>
    <property type="project" value="RGD"/>
</dbReference>
<dbReference type="GO" id="GO:0061709">
    <property type="term" value="P:reticulophagy"/>
    <property type="evidence" value="ECO:0000250"/>
    <property type="project" value="UniProtKB"/>
</dbReference>
<dbReference type="CDD" id="cd22658">
    <property type="entry name" value="STING_C_metazoan-like"/>
    <property type="match status" value="1"/>
</dbReference>
<dbReference type="FunFam" id="1.20.5.5200:FF:000001">
    <property type="entry name" value="Stimulator of interferon genes protein"/>
    <property type="match status" value="1"/>
</dbReference>
<dbReference type="FunFam" id="3.40.50.12100:FF:000001">
    <property type="entry name" value="Stimulator of interferon genes protein"/>
    <property type="match status" value="1"/>
</dbReference>
<dbReference type="Gene3D" id="1.20.5.5200">
    <property type="match status" value="1"/>
</dbReference>
<dbReference type="Gene3D" id="3.40.50.12100">
    <property type="entry name" value="Stimulator of interferon genes protein"/>
    <property type="match status" value="1"/>
</dbReference>
<dbReference type="InterPro" id="IPR029158">
    <property type="entry name" value="STING"/>
</dbReference>
<dbReference type="InterPro" id="IPR047191">
    <property type="entry name" value="STING_C_chordates"/>
</dbReference>
<dbReference type="InterPro" id="IPR038623">
    <property type="entry name" value="STING_C_sf"/>
</dbReference>
<dbReference type="InterPro" id="IPR055432">
    <property type="entry name" value="STING_LBD"/>
</dbReference>
<dbReference type="InterPro" id="IPR055434">
    <property type="entry name" value="STING_TM"/>
</dbReference>
<dbReference type="PANTHER" id="PTHR34339">
    <property type="entry name" value="STIMULATOR OF INTERFERON GENES PROTEIN"/>
    <property type="match status" value="1"/>
</dbReference>
<dbReference type="PANTHER" id="PTHR34339:SF1">
    <property type="entry name" value="STIMULATOR OF INTERFERON GENES PROTEIN"/>
    <property type="match status" value="1"/>
</dbReference>
<dbReference type="Pfam" id="PF15009">
    <property type="entry name" value="STING_LBD"/>
    <property type="match status" value="1"/>
</dbReference>
<dbReference type="Pfam" id="PF23417">
    <property type="entry name" value="STING_TM"/>
    <property type="match status" value="1"/>
</dbReference>
<protein>
    <recommendedName>
        <fullName evidence="6">Stimulator of interferon genes protein</fullName>
        <shortName evidence="6">rSTING</shortName>
    </recommendedName>
    <alternativeName>
        <fullName evidence="7">Transmembrane protein 173</fullName>
    </alternativeName>
</protein>
<gene>
    <name evidence="3" type="primary">Sting1</name>
    <name evidence="6" type="synonym">Sting</name>
    <name evidence="9" type="synonym">Tmem173</name>
</gene>
<name>STING_RAT</name>
<proteinExistence type="evidence at protein level"/>
<reference key="1">
    <citation type="journal article" date="2004" name="Nature">
        <title>Genome sequence of the Brown Norway rat yields insights into mammalian evolution.</title>
        <authorList>
            <person name="Gibbs R.A."/>
            <person name="Weinstock G.M."/>
            <person name="Metzker M.L."/>
            <person name="Muzny D.M."/>
            <person name="Sodergren E.J."/>
            <person name="Scherer S."/>
            <person name="Scott G."/>
            <person name="Steffen D."/>
            <person name="Worley K.C."/>
            <person name="Burch P.E."/>
            <person name="Okwuonu G."/>
            <person name="Hines S."/>
            <person name="Lewis L."/>
            <person name="Deramo C."/>
            <person name="Delgado O."/>
            <person name="Dugan-Rocha S."/>
            <person name="Miner G."/>
            <person name="Morgan M."/>
            <person name="Hawes A."/>
            <person name="Gill R."/>
            <person name="Holt R.A."/>
            <person name="Adams M.D."/>
            <person name="Amanatides P.G."/>
            <person name="Baden-Tillson H."/>
            <person name="Barnstead M."/>
            <person name="Chin S."/>
            <person name="Evans C.A."/>
            <person name="Ferriera S."/>
            <person name="Fosler C."/>
            <person name="Glodek A."/>
            <person name="Gu Z."/>
            <person name="Jennings D."/>
            <person name="Kraft C.L."/>
            <person name="Nguyen T."/>
            <person name="Pfannkoch C.M."/>
            <person name="Sitter C."/>
            <person name="Sutton G.G."/>
            <person name="Venter J.C."/>
            <person name="Woodage T."/>
            <person name="Smith D."/>
            <person name="Lee H.-M."/>
            <person name="Gustafson E."/>
            <person name="Cahill P."/>
            <person name="Kana A."/>
            <person name="Doucette-Stamm L."/>
            <person name="Weinstock K."/>
            <person name="Fechtel K."/>
            <person name="Weiss R.B."/>
            <person name="Dunn D.M."/>
            <person name="Green E.D."/>
            <person name="Blakesley R.W."/>
            <person name="Bouffard G.G."/>
            <person name="De Jong P.J."/>
            <person name="Osoegawa K."/>
            <person name="Zhu B."/>
            <person name="Marra M."/>
            <person name="Schein J."/>
            <person name="Bosdet I."/>
            <person name="Fjell C."/>
            <person name="Jones S."/>
            <person name="Krzywinski M."/>
            <person name="Mathewson C."/>
            <person name="Siddiqui A."/>
            <person name="Wye N."/>
            <person name="McPherson J."/>
            <person name="Zhao S."/>
            <person name="Fraser C.M."/>
            <person name="Shetty J."/>
            <person name="Shatsman S."/>
            <person name="Geer K."/>
            <person name="Chen Y."/>
            <person name="Abramzon S."/>
            <person name="Nierman W.C."/>
            <person name="Havlak P.H."/>
            <person name="Chen R."/>
            <person name="Durbin K.J."/>
            <person name="Egan A."/>
            <person name="Ren Y."/>
            <person name="Song X.-Z."/>
            <person name="Li B."/>
            <person name="Liu Y."/>
            <person name="Qin X."/>
            <person name="Cawley S."/>
            <person name="Cooney A.J."/>
            <person name="D'Souza L.M."/>
            <person name="Martin K."/>
            <person name="Wu J.Q."/>
            <person name="Gonzalez-Garay M.L."/>
            <person name="Jackson A.R."/>
            <person name="Kalafus K.J."/>
            <person name="McLeod M.P."/>
            <person name="Milosavljevic A."/>
            <person name="Virk D."/>
            <person name="Volkov A."/>
            <person name="Wheeler D.A."/>
            <person name="Zhang Z."/>
            <person name="Bailey J.A."/>
            <person name="Eichler E.E."/>
            <person name="Tuzun E."/>
            <person name="Birney E."/>
            <person name="Mongin E."/>
            <person name="Ureta-Vidal A."/>
            <person name="Woodwark C."/>
            <person name="Zdobnov E."/>
            <person name="Bork P."/>
            <person name="Suyama M."/>
            <person name="Torrents D."/>
            <person name="Alexandersson M."/>
            <person name="Trask B.J."/>
            <person name="Young J.M."/>
            <person name="Huang H."/>
            <person name="Wang H."/>
            <person name="Xing H."/>
            <person name="Daniels S."/>
            <person name="Gietzen D."/>
            <person name="Schmidt J."/>
            <person name="Stevens K."/>
            <person name="Vitt U."/>
            <person name="Wingrove J."/>
            <person name="Camara F."/>
            <person name="Mar Alba M."/>
            <person name="Abril J.F."/>
            <person name="Guigo R."/>
            <person name="Smit A."/>
            <person name="Dubchak I."/>
            <person name="Rubin E.M."/>
            <person name="Couronne O."/>
            <person name="Poliakov A."/>
            <person name="Huebner N."/>
            <person name="Ganten D."/>
            <person name="Goesele C."/>
            <person name="Hummel O."/>
            <person name="Kreitler T."/>
            <person name="Lee Y.-A."/>
            <person name="Monti J."/>
            <person name="Schulz H."/>
            <person name="Zimdahl H."/>
            <person name="Himmelbauer H."/>
            <person name="Lehrach H."/>
            <person name="Jacob H.J."/>
            <person name="Bromberg S."/>
            <person name="Gullings-Handley J."/>
            <person name="Jensen-Seaman M.I."/>
            <person name="Kwitek A.E."/>
            <person name="Lazar J."/>
            <person name="Pasko D."/>
            <person name="Tonellato P.J."/>
            <person name="Twigger S."/>
            <person name="Ponting C.P."/>
            <person name="Duarte J.M."/>
            <person name="Rice S."/>
            <person name="Goodstadt L."/>
            <person name="Beatson S.A."/>
            <person name="Emes R.D."/>
            <person name="Winter E.E."/>
            <person name="Webber C."/>
            <person name="Brandt P."/>
            <person name="Nyakatura G."/>
            <person name="Adetobi M."/>
            <person name="Chiaromonte F."/>
            <person name="Elnitski L."/>
            <person name="Eswara P."/>
            <person name="Hardison R.C."/>
            <person name="Hou M."/>
            <person name="Kolbe D."/>
            <person name="Makova K."/>
            <person name="Miller W."/>
            <person name="Nekrutenko A."/>
            <person name="Riemer C."/>
            <person name="Schwartz S."/>
            <person name="Taylor J."/>
            <person name="Yang S."/>
            <person name="Zhang Y."/>
            <person name="Lindpaintner K."/>
            <person name="Andrews T.D."/>
            <person name="Caccamo M."/>
            <person name="Clamp M."/>
            <person name="Clarke L."/>
            <person name="Curwen V."/>
            <person name="Durbin R.M."/>
            <person name="Eyras E."/>
            <person name="Searle S.M."/>
            <person name="Cooper G.M."/>
            <person name="Batzoglou S."/>
            <person name="Brudno M."/>
            <person name="Sidow A."/>
            <person name="Stone E.A."/>
            <person name="Payseur B.A."/>
            <person name="Bourque G."/>
            <person name="Lopez-Otin C."/>
            <person name="Puente X.S."/>
            <person name="Chakrabarti K."/>
            <person name="Chatterji S."/>
            <person name="Dewey C."/>
            <person name="Pachter L."/>
            <person name="Bray N."/>
            <person name="Yap V.B."/>
            <person name="Caspi A."/>
            <person name="Tesler G."/>
            <person name="Pevzner P.A."/>
            <person name="Haussler D."/>
            <person name="Roskin K.M."/>
            <person name="Baertsch R."/>
            <person name="Clawson H."/>
            <person name="Furey T.S."/>
            <person name="Hinrichs A.S."/>
            <person name="Karolchik D."/>
            <person name="Kent W.J."/>
            <person name="Rosenbloom K.R."/>
            <person name="Trumbower H."/>
            <person name="Weirauch M."/>
            <person name="Cooper D.N."/>
            <person name="Stenson P.D."/>
            <person name="Ma B."/>
            <person name="Brent M."/>
            <person name="Arumugam M."/>
            <person name="Shteynberg D."/>
            <person name="Copley R.R."/>
            <person name="Taylor M.S."/>
            <person name="Riethman H."/>
            <person name="Mudunuri U."/>
            <person name="Peterson J."/>
            <person name="Guyer M."/>
            <person name="Felsenfeld A."/>
            <person name="Old S."/>
            <person name="Mockrin S."/>
            <person name="Collins F.S."/>
        </authorList>
    </citation>
    <scope>NUCLEOTIDE SEQUENCE [LARGE SCALE GENOMIC DNA]</scope>
    <source>
        <strain>Brown Norway</strain>
    </source>
</reference>
<reference key="2">
    <citation type="submission" date="2005-07" db="EMBL/GenBank/DDBJ databases">
        <authorList>
            <person name="Mural R.J."/>
            <person name="Adams M.D."/>
            <person name="Myers E.W."/>
            <person name="Smith H.O."/>
            <person name="Venter J.C."/>
        </authorList>
    </citation>
    <scope>NUCLEOTIDE SEQUENCE [LARGE SCALE GENOMIC DNA]</scope>
    <source>
        <strain>Brown Norway</strain>
    </source>
</reference>
<reference key="3">
    <citation type="journal article" date="2015" name="Sci. Rep.">
        <title>Rat and human STINGs profile similarly towards anticancer/antiviral compounds.</title>
        <authorList>
            <person name="Zhang H."/>
            <person name="Han M.J."/>
            <person name="Tao J."/>
            <person name="Ye Z.Y."/>
            <person name="Du X.X."/>
            <person name="Deng M.J."/>
            <person name="Zhang X.Y."/>
            <person name="Li L.F."/>
            <person name="Jiang Z.F."/>
            <person name="Su X.D."/>
        </authorList>
    </citation>
    <scope>FUNCTION</scope>
    <scope>X-RAY CRYSTALLOGRAPHY (1.55 ANGSTROMS) OF 140-337 OF APOPROTEIN AND IN COMPLEX WITH 2'-3' LINKED CGAMP</scope>
    <scope>SUBUNIT</scope>
    <scope>MUTAGENESIS OF PRO-141; GLU-143; VAL-144; SER-145; GLU-149; GLU-150; LYS-151 AND THR-230</scope>
    <scope>ACTIVITY REGULATION</scope>
</reference>
<keyword id="KW-0002">3D-structure</keyword>
<keyword id="KW-0072">Autophagy</keyword>
<keyword id="KW-1003">Cell membrane</keyword>
<keyword id="KW-0963">Cytoplasm</keyword>
<keyword id="KW-0968">Cytoplasmic vesicle</keyword>
<keyword id="KW-0256">Endoplasmic reticulum</keyword>
<keyword id="KW-0333">Golgi apparatus</keyword>
<keyword id="KW-0391">Immunity</keyword>
<keyword id="KW-0399">Innate immunity</keyword>
<keyword id="KW-0407">Ion channel</keyword>
<keyword id="KW-0406">Ion transport</keyword>
<keyword id="KW-1017">Isopeptide bond</keyword>
<keyword id="KW-0449">Lipoprotein</keyword>
<keyword id="KW-0472">Membrane</keyword>
<keyword id="KW-0496">Mitochondrion</keyword>
<keyword id="KW-1000">Mitochondrion outer membrane</keyword>
<keyword id="KW-0547">Nucleotide-binding</keyword>
<keyword id="KW-0564">Palmitate</keyword>
<keyword id="KW-0597">Phosphoprotein</keyword>
<keyword id="KW-1185">Reference proteome</keyword>
<keyword id="KW-0812">Transmembrane</keyword>
<keyword id="KW-1133">Transmembrane helix</keyword>
<keyword id="KW-0813">Transport</keyword>
<keyword id="KW-0832">Ubl conjugation</keyword>
<organism>
    <name type="scientific">Rattus norvegicus</name>
    <name type="common">Rat</name>
    <dbReference type="NCBI Taxonomy" id="10116"/>
    <lineage>
        <taxon>Eukaryota</taxon>
        <taxon>Metazoa</taxon>
        <taxon>Chordata</taxon>
        <taxon>Craniata</taxon>
        <taxon>Vertebrata</taxon>
        <taxon>Euteleostomi</taxon>
        <taxon>Mammalia</taxon>
        <taxon>Eutheria</taxon>
        <taxon>Euarchontoglires</taxon>
        <taxon>Glires</taxon>
        <taxon>Rodentia</taxon>
        <taxon>Myomorpha</taxon>
        <taxon>Muroidea</taxon>
        <taxon>Muridae</taxon>
        <taxon>Murinae</taxon>
        <taxon>Rattus</taxon>
    </lineage>
</organism>
<comment type="function">
    <text evidence="2 3 5">Facilitator of innate immune signaling that acts as a sensor of cytosolic DNA from bacteria and viruses and promotes the production of type I interferon (IFN-alpha and IFN-beta) (PubMed:26669264). Innate immune response is triggered in response to non-CpG double-stranded DNA from viruses and bacteria delivered to the cytoplasm (By similarity). Acts by binding cyclic dinucleotides: recognizes and binds cyclic di-GMP (c-di-GMP), a second messenger produced by bacteria, cyclic UMP-AMP (2',3'-cUAMP), and cyclic GMP-AMP (cGAMP), a messenger produced by CGAS in response to DNA virus in the cytosol (By similarity). Upon binding to c-di-GMP, cUAMP or cGAMP, STING1 oligomerizes, translocates from the endoplasmic reticulum and is phosphorylated by TBK1 on the pLxIS motif, leading to recruitment and subsequent activation of the transcription factor IRF3 to induce expression of type I interferon and exert a potent anti-viral state (PubMed:26669264). Exhibits 2',3' phosphodiester linkage-specific ligand recognition: can bind both 2'-3' linked cGAMP (2'-3'-cGAMP) and 3'-3' linked cGAMP but is preferentially activated by 2'-3' linked cGAMP (PubMed:26669264). The preference for 2'-3'-cGAMP, compared to other linkage isomers is probably due to the ligand itself, whichs adopts an organized free-ligand conformation that resembles the STING1-bound conformation and pays low energy costs in changing into the active conformation (By similarity). In addition to promote the production of type I interferons, plays a direct role in autophagy (By similarity). Following cGAMP-binding, STING1 buds from the endoplasmic reticulum into COPII vesicles, which then form the endoplasmic reticulum-Golgi intermediate compartment (ERGIC) (By similarity). The ERGIC serves as the membrane source for WIPI2 recruitment and LC3 lipidation, leading to formation of autophagosomes that target cytosolic DNA or DNA viruses for degradation by the lysosome (By similarity). Promotes autophagy by acting as a proton channel that directs proton efflux from the Golgi to facilitate MAP1LC3B/LC3B lipidation (By similarity). The autophagy- and interferon-inducing activities can be uncoupled and autophagy induction is independent of TBK1 phosphorylation (By similarity). Autophagy is also triggered upon infection by bacteria: following c-di-GMP-binding, which is produced by live Gram-positive bacteria, promotes reticulophagy (By similarity). May be involved in translocon function, the translocon possibly being able to influence the induction of type I interferons (By similarity). May be involved in transduction of apoptotic signals via its association with the major histocompatibility complex class II (MHC-II) (By similarity).</text>
</comment>
<comment type="catalytic activity">
    <reaction evidence="3">
        <text>H(+)(in) = H(+)(out)</text>
        <dbReference type="Rhea" id="RHEA:34979"/>
        <dbReference type="ChEBI" id="CHEBI:15378"/>
    </reaction>
</comment>
<comment type="activity regulation">
    <text evidence="5">In contrast to mouse protein, not activated by anticancer molecule 5,6-dimethylxanthenone 4-acetic acid (DMXAA).</text>
</comment>
<comment type="subunit">
    <text evidence="2 3 5">Homodimer; forms a homodimer in absence of cyclic nucleotide (c-di-GMP or cGAMP); 'Lys-63'-linked ubiquitination at Lys-151 is required for homodimerization (PubMed:26669264). Homotetramer; in presence of cyclic nucleotide (c-di-GMP or cGAMP), forms tetramers and higher-order oligomers through side-by-side packing (By similarity). Interacts (when phosphorylated) with IRF3; following activation and phosphorylation on the pLxIS motif by TBK1, recruits IRF3 (By similarity). Interacts with RIGI, MAVS and SSR2 (By similarity). Interacts with RNF5 and TRIM56 (By similarity). Interacts with TBK1; when homodimer, leading to subsequent production of IFN-beta (By similarity). Interacts with IFIT1 and IFIT2 (By similarity). Interacts with TRIM29; this interaction induces STING1 ubiquitination and subsequent degradation (By similarity). Associates with the MHC-II complex (By similarity). Interacts with STEEP1; interaction takes place upon cGAMP-activation and STING1 phosphorylation by MAP3K7/TAK1 and promotes STING1 translocation to COPII vesicles (By similarity). Interacts with SEC24A, SEC24B and SEC24C; promoting translocation to COPII vesicles (By similarity). Interacts (when ubiquitinated) with SQSTM1; leading to relocalization to autophagosomes (By similarity). Interacts with SURF4 (By similarity). Interacts with HNRNPA2B1 (By similarity). Interacts with ZDHHC1; ZDHHC1 constitutively interacts with STING1 and in presence of DNA viruses activates it by promoting its cGAMP-induced oligomerization and the recruitment of downstream signaling components (By similarity). Interacts with ZDHHC11; in presence of DNA viruses promotes the recruitment of IRF3 to STING1 (By similarity). Interacts with TOMM70 (By similarity). Interacts with TAB1; promoting recruitment of TAB1 to the endoplasmic reticulum membrane and subsequent activation of MAP3K7/TAK1 (By similarity). Interacts (via transmembrane domain) with TMEM203 (By similarity). Interacts with DDX41 (By similarity).</text>
</comment>
<comment type="subcellular location">
    <subcellularLocation>
        <location evidence="3">Endoplasmic reticulum membrane</location>
        <topology evidence="3 4">Multi-pass membrane protein</topology>
    </subcellularLocation>
    <subcellularLocation>
        <location evidence="3">Cytoplasm</location>
        <location evidence="3">Perinuclear region</location>
    </subcellularLocation>
    <subcellularLocation>
        <location evidence="3">Endoplasmic reticulum-Golgi intermediate compartment membrane</location>
        <topology evidence="4">Multi-pass membrane protein</topology>
    </subcellularLocation>
    <subcellularLocation>
        <location evidence="3">Golgi apparatus membrane</location>
        <topology evidence="4">Multi-pass membrane protein</topology>
    </subcellularLocation>
    <subcellularLocation>
        <location evidence="3">Cytoplasmic vesicle</location>
        <location evidence="3">Autophagosome membrane</location>
        <topology evidence="4">Multi-pass membrane protein</topology>
    </subcellularLocation>
    <subcellularLocation>
        <location evidence="3">Mitochondrion outer membrane</location>
        <topology evidence="4">Multi-pass membrane protein</topology>
    </subcellularLocation>
    <subcellularLocation>
        <location evidence="2">Cell membrane</location>
        <topology evidence="4">Multi-pass membrane protein</topology>
    </subcellularLocation>
    <text evidence="2 3">In response to double-stranded DNA stimulation, translocates from the endoplasmic reticulum through the endoplasmic reticulum-Golgi intermediate compartment and Golgi to post-Golgi vesicles, where the kinase TBK1 is recruited. Upon cGAMP-binding, translocates to the endoplasmic reticulum-Golgi intermediate compartment (ERGIC) in a process that is dependent on COPII vesicles; STING1-containing ERGIC serves as a membrane source for LC3 lipidation, which is a key step in autophagosome biogenesis. Localizes in the lysosome membrane in a TMEM203-dependent manner.</text>
</comment>
<comment type="domain">
    <text evidence="1 3">In absence of cGAMP, the transmembrane and cytoplasmic regions interact to form an integrated, domain-swapped dimeric assembly (By similarity). In absence of cyclic nucleotide (c-di-GMP or cGAMP), the protein is autoinhibited by an intramolecular interaction between the cyclic dinucleotide-binding domain (CBD) and the C-terminal tail (CTT) (By similarity). Following cGAMP-binding, the cyclic dinucleotide-binding domain (CBD) is closed, leading to a 180 degrees rotation of the CBD domain relative to the transmembrane domain. This rotation is coupled to a conformational change in a loop on the side of the CBD dimer, which leads to the formation of the STING1 tetramer and higher-order oligomers through side-by-side packing (By similarity). The N-terminal part of the CBD region was initially though to contain a fifth transmembrane region (TM5) but is part of the folded, soluble CBD (By similarity).</text>
</comment>
<comment type="domain">
    <text evidence="3">The pLxIS motif constitutes an IRF3-binding motif: following phosphorylation by TBK1, the phosphorylated pLxIS motif of STING1 recruits IRF3. IRF3 is then phosphorylated and activated by TBK1 to induce type-I interferons and other cytokines.</text>
</comment>
<comment type="domain">
    <text evidence="3">The N-terminal domain interacts with glycerophospholipids and phospholipids.</text>
</comment>
<comment type="PTM">
    <text evidence="2 3">Phosphorylation by TBK1 leads to activation and production of IFN-beta. Following cyclic nucleotide (c-di-GMP or cGAMP)-binding, activation and translocation from the endoplasmic reticulum, STING1 is phosphorylated by TBK1 at Ser-366 in the pLxIS motif. The phosphorylated pLxIS motif constitutes an IRF3-binding motif, leading to recruitment of the transcription factor IRF3 to induce type-I interferons and other cytokines (By similarity). Phosphorylated on tyrosine residues upon MHC-II aggregation (By similarity). Dephosphorylation by PPP6C leads to inactivation and decreased production of IFN-beta (By similarity). Phosphorylation at Ser-358 is also required to activate IRF3 (By similarity). Phosphorylation at Ser-355 by MAP3K7/TAK1 facilitates its interaction with STEEP1, promoting STING1 translocation to COPII vesicles (By similarity).</text>
</comment>
<comment type="PTM">
    <text evidence="2 3">Ubiquitinated (By similarity). Ubiquitinated via 'Lys-63'-linked ubiquitin chains in response to double-stranded DNA treatment, leading to relocalization to autophagosomes and subsequent degradation; this process is dependent on SQSTM1 (By similarity). 'Lys-63'-linked ubiquitination mediated by TRIM56 at Lys-151 promotes homodimerization and recruitment of the antiviral kinase TBK1 and subsequent production of IFN-beta. 'Lys-48'-linked polyubiquitination at Lys-151 occurring after viral infection is mediated by RNF5 and leads to proteasomal degradation. 'Lys-11'-linked polyubiquitination at Lys-151 by RNF26 leads to stabilize STING1: it protects STING1 from RNF5-mediated 'Lys-48'-linked polyubiquitination (By similarity). 'Lys-33'-linked and 'Lys-48'-linked deubiquitinated by USP20; leading to its stabilization and promotion of innate antiviral response (By similarity). 'Lys-48'-linked deubiquitinated by USP44; leading to its stabilization and promotion of innate antiviral response (By similarity). Deubiquitinated by USP13; leading to inhibition of innate antiviral response (By similarity). 'Lys-63'-linked deubiquitinated by USP49; leading to inhibition of the subsequent recruitment of TBK1 to the signaling complex (By similarity). 'Lys-63'-linked ubiquitination mediated by RNF39 promotes the activation of the cGAS-STING pathway (By similarity).</text>
</comment>
<comment type="PTM">
    <text evidence="2">Sumoylated at Lys-338 by TRIM38 during the early phase of viral infection, promoting its stability by preventing its relocalization to autophagosomes and subsequent degradation. Desumoylated by SENP2 during the late phase of viral infection.</text>
</comment>
<comment type="PTM">
    <text evidence="2">Palmitoylation takes place in the Golgi apparatus and creates a platform for the recruitment of TBK1.</text>
</comment>
<comment type="similarity">
    <text evidence="7">Belongs to the STING family.</text>
</comment>
<accession>F1M391</accession>
<sequence length="379" mass="42655">MPYSNLHPSIPRPRSYRFKLAAFVLLVGSLMSLWMTGEPPSHTLHYLALHVASQQLGLLLKKLCCLAEELCHVQSRYQGSYWKAVRACVGSPICFMALILLSFYFYCSLENTSDLRLAWHLGILVLSKSLSMTLDLQSLAPAEVSAVCEEKNFNVAHGLAWSYYIGYLKLILPGLQARIRMFNQLHNNMLSGAGSRRLYILFPLDCGVPDDLSVADPNIRFRDMLPQQNTDRAGVKNRAYSNSVYELLENGQPAGACILEYATPLQTLFAMSQDGKAGFSREDRLEQAKLFCRTLEEILADVPESRNHCRLIVYQESEEGNSFSLSQEVLRHIRQEEKEEVTMSGPPTSVAPRPSLLSQEPRLLISGMEQPLPLRTDLI</sequence>
<evidence type="ECO:0000250" key="1">
    <source>
        <dbReference type="UniProtKB" id="E1C7U0"/>
    </source>
</evidence>
<evidence type="ECO:0000250" key="2">
    <source>
        <dbReference type="UniProtKB" id="Q3TBT3"/>
    </source>
</evidence>
<evidence type="ECO:0000250" key="3">
    <source>
        <dbReference type="UniProtKB" id="Q86WV6"/>
    </source>
</evidence>
<evidence type="ECO:0000255" key="4"/>
<evidence type="ECO:0000269" key="5">
    <source>
    </source>
</evidence>
<evidence type="ECO:0000303" key="6">
    <source>
    </source>
</evidence>
<evidence type="ECO:0000305" key="7"/>
<evidence type="ECO:0000305" key="8">
    <source>
    </source>
</evidence>
<evidence type="ECO:0000312" key="9">
    <source>
        <dbReference type="RGD" id="1562552"/>
    </source>
</evidence>
<evidence type="ECO:0007829" key="10">
    <source>
        <dbReference type="PDB" id="5GRM"/>
    </source>
</evidence>